<keyword id="KW-0027">Amidation</keyword>
<keyword id="KW-0044">Antibiotic</keyword>
<keyword id="KW-0929">Antimicrobial</keyword>
<keyword id="KW-0145">Chemotaxis</keyword>
<keyword id="KW-0903">Direct protein sequencing</keyword>
<keyword id="KW-0295">Fungicide</keyword>
<keyword id="KW-1213">G-protein coupled receptor impairing toxin</keyword>
<keyword id="KW-0391">Immunity</keyword>
<keyword id="KW-0399">Innate immunity</keyword>
<keyword id="KW-0467">Mast cell degranulation</keyword>
<keyword id="KW-0964">Secreted</keyword>
<keyword id="KW-0800">Toxin</keyword>
<feature type="peptide" id="PRO_0000246007" description="Vespid chemotactic peptide 5e" evidence="4">
    <location>
        <begin position="1"/>
        <end position="13"/>
    </location>
</feature>
<feature type="modified residue" description="Leucine amide" evidence="2">
    <location>
        <position position="13"/>
    </location>
</feature>
<sequence length="13" mass="1368">FLPIIAKLLGGLL</sequence>
<evidence type="ECO:0000250" key="1">
    <source>
        <dbReference type="UniProtKB" id="P01514"/>
    </source>
</evidence>
<evidence type="ECO:0000250" key="2">
    <source>
        <dbReference type="UniProtKB" id="P17234"/>
    </source>
</evidence>
<evidence type="ECO:0000250" key="3">
    <source>
        <dbReference type="UniProtKB" id="P84914"/>
    </source>
</evidence>
<evidence type="ECO:0000269" key="4">
    <source>
    </source>
</evidence>
<evidence type="ECO:0000303" key="5">
    <source>
    </source>
</evidence>
<evidence type="ECO:0000305" key="6"/>
<evidence type="ECO:0000305" key="7">
    <source>
    </source>
</evidence>
<proteinExistence type="evidence at protein level"/>
<reference key="1">
    <citation type="journal article" date="2006" name="Toxicon">
        <title>Two families of antimicrobial peptides from wasp (Vespa magnifica) venom.</title>
        <authorList>
            <person name="Xu X."/>
            <person name="Li J."/>
            <person name="Lu Q."/>
            <person name="Yang H."/>
            <person name="Zhang Y."/>
            <person name="Lai R."/>
        </authorList>
    </citation>
    <scope>PROTEIN SEQUENCE</scope>
    <scope>FUNCTION</scope>
    <scope>MASS SPECTROMETRY</scope>
    <scope>SUBCELLULAR LOCATION</scope>
    <source>
        <tissue>Venom</tissue>
    </source>
</reference>
<dbReference type="GO" id="GO:0005576">
    <property type="term" value="C:extracellular region"/>
    <property type="evidence" value="ECO:0007669"/>
    <property type="project" value="UniProtKB-SubCell"/>
</dbReference>
<dbReference type="GO" id="GO:0090729">
    <property type="term" value="F:toxin activity"/>
    <property type="evidence" value="ECO:0007669"/>
    <property type="project" value="UniProtKB-KW"/>
</dbReference>
<dbReference type="GO" id="GO:0006935">
    <property type="term" value="P:chemotaxis"/>
    <property type="evidence" value="ECO:0007669"/>
    <property type="project" value="UniProtKB-KW"/>
</dbReference>
<dbReference type="GO" id="GO:0042742">
    <property type="term" value="P:defense response to bacterium"/>
    <property type="evidence" value="ECO:0007669"/>
    <property type="project" value="UniProtKB-KW"/>
</dbReference>
<dbReference type="GO" id="GO:0050832">
    <property type="term" value="P:defense response to fungus"/>
    <property type="evidence" value="ECO:0007669"/>
    <property type="project" value="UniProtKB-KW"/>
</dbReference>
<dbReference type="GO" id="GO:0045087">
    <property type="term" value="P:innate immune response"/>
    <property type="evidence" value="ECO:0007669"/>
    <property type="project" value="UniProtKB-KW"/>
</dbReference>
<dbReference type="GO" id="GO:0031640">
    <property type="term" value="P:killing of cells of another organism"/>
    <property type="evidence" value="ECO:0007669"/>
    <property type="project" value="UniProtKB-KW"/>
</dbReference>
<accession>P0C1M1</accession>
<organism>
    <name type="scientific">Vespa magnifica</name>
    <name type="common">Hornet</name>
    <dbReference type="NCBI Taxonomy" id="202807"/>
    <lineage>
        <taxon>Eukaryota</taxon>
        <taxon>Metazoa</taxon>
        <taxon>Ecdysozoa</taxon>
        <taxon>Arthropoda</taxon>
        <taxon>Hexapoda</taxon>
        <taxon>Insecta</taxon>
        <taxon>Pterygota</taxon>
        <taxon>Neoptera</taxon>
        <taxon>Endopterygota</taxon>
        <taxon>Hymenoptera</taxon>
        <taxon>Apocrita</taxon>
        <taxon>Aculeata</taxon>
        <taxon>Vespoidea</taxon>
        <taxon>Vespidae</taxon>
        <taxon>Vespinae</taxon>
        <taxon>Vespa</taxon>
    </lineage>
</organism>
<comment type="function">
    <text evidence="1 2 3 4">Mast cell degranulating peptide (By similarity). Shows antimicrobial activity against the Gram-negative bacteria E.coli ATCC 25922 (MIC=30 ug/ml), the Gram-positive bacteria S.aureus ATCC 2592 (MIC=5 ug/ml) and the fungus C.albicans ATCC 2002 (MIC=25 ug/ml) (PubMed:16330062). Has little hemolytic activity (PubMed:16330062). Induces the chemotaxis of neutrophils (By similarity) (PubMed:16330062). Its mast cell degranulation activity may be related to the activation of G-protein coupled receptors in mast cells as well as interaction with other proteins located in cell endosomal membranes in the mast cells (By similarity).</text>
</comment>
<comment type="subcellular location">
    <subcellularLocation>
        <location evidence="4">Secreted</location>
    </subcellularLocation>
</comment>
<comment type="tissue specificity">
    <text evidence="7">Expressed by the venom gland.</text>
</comment>
<comment type="mass spectrometry" mass="1375.7" method="FAB" evidence="4"/>
<comment type="miscellaneous">
    <text evidence="6">The primary structure of this peptide is identical to that of Vespid chemotactic peptide X from Vespa xanthoptera (AC P17234).</text>
</comment>
<comment type="similarity">
    <text evidence="6">Belongs to the MCD family. Crabrolin subfamily.</text>
</comment>
<protein>
    <recommendedName>
        <fullName evidence="5">Vespid chemotactic peptide 5e</fullName>
        <shortName evidence="7">VCP 5e</shortName>
    </recommendedName>
</protein>
<name>CRBLE_VESMG</name>